<evidence type="ECO:0000250" key="1">
    <source>
        <dbReference type="UniProtKB" id="O95336"/>
    </source>
</evidence>
<evidence type="ECO:0000305" key="2"/>
<evidence type="ECO:0000312" key="3">
    <source>
        <dbReference type="FlyBase" id="FBgn0030239"/>
    </source>
</evidence>
<sequence length="243" mass="26672">MSEKKGALKVIPSASEEQLVQALGDLLQRCSQEALAKHDKFSVGLSGGSLVQLLTKALKSCNLKTAKWVFFFCDERYVRLDDSDSTYGAYRAEWLTQLPCIQESQFVRADTSQPLDACAADYEAKVKSQVDRFDLLLLGMGPDGHTCSLFPEQPATLQETKRLVIPIRNSPKPPPERITFTLPLINKARNVAFVVTGAAKASVVKSVFVDLDKKFPAAWVNPTKGQLTLIVDAGAGKEIETLK</sequence>
<protein>
    <recommendedName>
        <fullName evidence="2">Probable 6-phosphogluconolactonase</fullName>
        <shortName evidence="2">6PGL</shortName>
        <ecNumber evidence="1">3.1.1.31</ecNumber>
    </recommendedName>
</protein>
<name>6PGL_DROME</name>
<gene>
    <name evidence="3" type="primary">Pgls</name>
    <name evidence="3" type="ORF">CG17333</name>
</gene>
<comment type="function">
    <text evidence="1">Hydrolysis of 6-phosphogluconolactone to 6-phosphogluconate.</text>
</comment>
<comment type="catalytic activity">
    <reaction evidence="1">
        <text>6-phospho-D-glucono-1,5-lactone + H2O = 6-phospho-D-gluconate + H(+)</text>
        <dbReference type="Rhea" id="RHEA:12556"/>
        <dbReference type="ChEBI" id="CHEBI:15377"/>
        <dbReference type="ChEBI" id="CHEBI:15378"/>
        <dbReference type="ChEBI" id="CHEBI:57955"/>
        <dbReference type="ChEBI" id="CHEBI:58759"/>
        <dbReference type="EC" id="3.1.1.31"/>
    </reaction>
</comment>
<comment type="pathway">
    <text>Carbohydrate degradation; pentose phosphate pathway; D-ribulose 5-phosphate from D-glucose 6-phosphate (oxidative stage): step 2/3.</text>
</comment>
<comment type="similarity">
    <text evidence="2">Belongs to the glucosamine/galactosamine-6-phosphate isomerase family. 6-phosphogluconolactonase subfamily.</text>
</comment>
<proteinExistence type="evidence at transcript level"/>
<feature type="chain" id="PRO_0000090081" description="Probable 6-phosphogluconolactonase">
    <location>
        <begin position="1"/>
        <end position="243"/>
    </location>
</feature>
<keyword id="KW-0378">Hydrolase</keyword>
<keyword id="KW-1185">Reference proteome</keyword>
<accession>Q9VZ64</accession>
<accession>Q53XD9</accession>
<dbReference type="EC" id="3.1.1.31" evidence="1"/>
<dbReference type="EMBL" id="AE014298">
    <property type="protein sequence ID" value="AAF47963.1"/>
    <property type="molecule type" value="Genomic_DNA"/>
</dbReference>
<dbReference type="EMBL" id="BT012304">
    <property type="protein sequence ID" value="AAS77429.1"/>
    <property type="molecule type" value="mRNA"/>
</dbReference>
<dbReference type="RefSeq" id="NP_572656.1">
    <property type="nucleotide sequence ID" value="NM_132428.3"/>
</dbReference>
<dbReference type="SMR" id="Q9VZ64"/>
<dbReference type="BioGRID" id="58430">
    <property type="interactions" value="1"/>
</dbReference>
<dbReference type="FunCoup" id="Q9VZ64">
    <property type="interactions" value="1435"/>
</dbReference>
<dbReference type="STRING" id="7227.FBpp0073235"/>
<dbReference type="PaxDb" id="7227-FBpp0073235"/>
<dbReference type="DNASU" id="32013"/>
<dbReference type="EnsemblMetazoa" id="FBtr0073379">
    <property type="protein sequence ID" value="FBpp0073235"/>
    <property type="gene ID" value="FBgn0030239"/>
</dbReference>
<dbReference type="GeneID" id="32013"/>
<dbReference type="KEGG" id="dme:Dmel_CG17333"/>
<dbReference type="UCSC" id="CG17333-RA">
    <property type="organism name" value="d. melanogaster"/>
</dbReference>
<dbReference type="AGR" id="FB:FBgn0030239"/>
<dbReference type="CTD" id="25796"/>
<dbReference type="FlyBase" id="FBgn0030239">
    <property type="gene designation" value="Pgls"/>
</dbReference>
<dbReference type="VEuPathDB" id="VectorBase:FBgn0030239"/>
<dbReference type="eggNOG" id="KOG3147">
    <property type="taxonomic scope" value="Eukaryota"/>
</dbReference>
<dbReference type="GeneTree" id="ENSGT00550000075110"/>
<dbReference type="HOGENOM" id="CLU_053947_0_2_1"/>
<dbReference type="InParanoid" id="Q9VZ64"/>
<dbReference type="OMA" id="YQLFEFE"/>
<dbReference type="OrthoDB" id="432544at2759"/>
<dbReference type="PhylomeDB" id="Q9VZ64"/>
<dbReference type="Reactome" id="R-DME-71336">
    <property type="pathway name" value="Pentose phosphate pathway"/>
</dbReference>
<dbReference type="UniPathway" id="UPA00115">
    <property type="reaction ID" value="UER00409"/>
</dbReference>
<dbReference type="BioGRID-ORCS" id="32013">
    <property type="hits" value="1 hit in 1 CRISPR screen"/>
</dbReference>
<dbReference type="GenomeRNAi" id="32013"/>
<dbReference type="PRO" id="PR:Q9VZ64"/>
<dbReference type="Proteomes" id="UP000000803">
    <property type="component" value="Chromosome X"/>
</dbReference>
<dbReference type="Bgee" id="FBgn0030239">
    <property type="expression patterns" value="Expressed in crop (Drosophila) and 110 other cell types or tissues"/>
</dbReference>
<dbReference type="GO" id="GO:0005829">
    <property type="term" value="C:cytosol"/>
    <property type="evidence" value="ECO:0000318"/>
    <property type="project" value="GO_Central"/>
</dbReference>
<dbReference type="GO" id="GO:0017057">
    <property type="term" value="F:6-phosphogluconolactonase activity"/>
    <property type="evidence" value="ECO:0000314"/>
    <property type="project" value="FlyBase"/>
</dbReference>
<dbReference type="GO" id="GO:0005975">
    <property type="term" value="P:carbohydrate metabolic process"/>
    <property type="evidence" value="ECO:0007669"/>
    <property type="project" value="InterPro"/>
</dbReference>
<dbReference type="GO" id="GO:0009051">
    <property type="term" value="P:pentose-phosphate shunt, oxidative branch"/>
    <property type="evidence" value="ECO:0000314"/>
    <property type="project" value="FlyBase"/>
</dbReference>
<dbReference type="CDD" id="cd01400">
    <property type="entry name" value="6PGL"/>
    <property type="match status" value="1"/>
</dbReference>
<dbReference type="FunFam" id="3.40.50.1360:FF:000035">
    <property type="entry name" value="6-phosphogluconolactonase"/>
    <property type="match status" value="1"/>
</dbReference>
<dbReference type="Gene3D" id="3.40.50.1360">
    <property type="match status" value="1"/>
</dbReference>
<dbReference type="InterPro" id="IPR005900">
    <property type="entry name" value="6-phosphogluconolactonase_DevB"/>
</dbReference>
<dbReference type="InterPro" id="IPR006148">
    <property type="entry name" value="Glc/Gal-6P_isomerase"/>
</dbReference>
<dbReference type="InterPro" id="IPR037171">
    <property type="entry name" value="NagB/RpiA_transferase-like"/>
</dbReference>
<dbReference type="InterPro" id="IPR039104">
    <property type="entry name" value="PGLS"/>
</dbReference>
<dbReference type="NCBIfam" id="TIGR01198">
    <property type="entry name" value="pgl"/>
    <property type="match status" value="1"/>
</dbReference>
<dbReference type="PANTHER" id="PTHR11054">
    <property type="entry name" value="6-PHOSPHOGLUCONOLACTONASE"/>
    <property type="match status" value="1"/>
</dbReference>
<dbReference type="PANTHER" id="PTHR11054:SF0">
    <property type="entry name" value="6-PHOSPHOGLUCONOLACTONASE"/>
    <property type="match status" value="1"/>
</dbReference>
<dbReference type="Pfam" id="PF01182">
    <property type="entry name" value="Glucosamine_iso"/>
    <property type="match status" value="1"/>
</dbReference>
<dbReference type="SUPFAM" id="SSF100950">
    <property type="entry name" value="NagB/RpiA/CoA transferase-like"/>
    <property type="match status" value="1"/>
</dbReference>
<reference evidence="2" key="1">
    <citation type="journal article" date="2000" name="Science">
        <title>The genome sequence of Drosophila melanogaster.</title>
        <authorList>
            <person name="Adams M.D."/>
            <person name="Celniker S.E."/>
            <person name="Holt R.A."/>
            <person name="Evans C.A."/>
            <person name="Gocayne J.D."/>
            <person name="Amanatides P.G."/>
            <person name="Scherer S.E."/>
            <person name="Li P.W."/>
            <person name="Hoskins R.A."/>
            <person name="Galle R.F."/>
            <person name="George R.A."/>
            <person name="Lewis S.E."/>
            <person name="Richards S."/>
            <person name="Ashburner M."/>
            <person name="Henderson S.N."/>
            <person name="Sutton G.G."/>
            <person name="Wortman J.R."/>
            <person name="Yandell M.D."/>
            <person name="Zhang Q."/>
            <person name="Chen L.X."/>
            <person name="Brandon R.C."/>
            <person name="Rogers Y.-H.C."/>
            <person name="Blazej R.G."/>
            <person name="Champe M."/>
            <person name="Pfeiffer B.D."/>
            <person name="Wan K.H."/>
            <person name="Doyle C."/>
            <person name="Baxter E.G."/>
            <person name="Helt G."/>
            <person name="Nelson C.R."/>
            <person name="Miklos G.L.G."/>
            <person name="Abril J.F."/>
            <person name="Agbayani A."/>
            <person name="An H.-J."/>
            <person name="Andrews-Pfannkoch C."/>
            <person name="Baldwin D."/>
            <person name="Ballew R.M."/>
            <person name="Basu A."/>
            <person name="Baxendale J."/>
            <person name="Bayraktaroglu L."/>
            <person name="Beasley E.M."/>
            <person name="Beeson K.Y."/>
            <person name="Benos P.V."/>
            <person name="Berman B.P."/>
            <person name="Bhandari D."/>
            <person name="Bolshakov S."/>
            <person name="Borkova D."/>
            <person name="Botchan M.R."/>
            <person name="Bouck J."/>
            <person name="Brokstein P."/>
            <person name="Brottier P."/>
            <person name="Burtis K.C."/>
            <person name="Busam D.A."/>
            <person name="Butler H."/>
            <person name="Cadieu E."/>
            <person name="Center A."/>
            <person name="Chandra I."/>
            <person name="Cherry J.M."/>
            <person name="Cawley S."/>
            <person name="Dahlke C."/>
            <person name="Davenport L.B."/>
            <person name="Davies P."/>
            <person name="de Pablos B."/>
            <person name="Delcher A."/>
            <person name="Deng Z."/>
            <person name="Mays A.D."/>
            <person name="Dew I."/>
            <person name="Dietz S.M."/>
            <person name="Dodson K."/>
            <person name="Doup L.E."/>
            <person name="Downes M."/>
            <person name="Dugan-Rocha S."/>
            <person name="Dunkov B.C."/>
            <person name="Dunn P."/>
            <person name="Durbin K.J."/>
            <person name="Evangelista C.C."/>
            <person name="Ferraz C."/>
            <person name="Ferriera S."/>
            <person name="Fleischmann W."/>
            <person name="Fosler C."/>
            <person name="Gabrielian A.E."/>
            <person name="Garg N.S."/>
            <person name="Gelbart W.M."/>
            <person name="Glasser K."/>
            <person name="Glodek A."/>
            <person name="Gong F."/>
            <person name="Gorrell J.H."/>
            <person name="Gu Z."/>
            <person name="Guan P."/>
            <person name="Harris M."/>
            <person name="Harris N.L."/>
            <person name="Harvey D.A."/>
            <person name="Heiman T.J."/>
            <person name="Hernandez J.R."/>
            <person name="Houck J."/>
            <person name="Hostin D."/>
            <person name="Houston K.A."/>
            <person name="Howland T.J."/>
            <person name="Wei M.-H."/>
            <person name="Ibegwam C."/>
            <person name="Jalali M."/>
            <person name="Kalush F."/>
            <person name="Karpen G.H."/>
            <person name="Ke Z."/>
            <person name="Kennison J.A."/>
            <person name="Ketchum K.A."/>
            <person name="Kimmel B.E."/>
            <person name="Kodira C.D."/>
            <person name="Kraft C.L."/>
            <person name="Kravitz S."/>
            <person name="Kulp D."/>
            <person name="Lai Z."/>
            <person name="Lasko P."/>
            <person name="Lei Y."/>
            <person name="Levitsky A.A."/>
            <person name="Li J.H."/>
            <person name="Li Z."/>
            <person name="Liang Y."/>
            <person name="Lin X."/>
            <person name="Liu X."/>
            <person name="Mattei B."/>
            <person name="McIntosh T.C."/>
            <person name="McLeod M.P."/>
            <person name="McPherson D."/>
            <person name="Merkulov G."/>
            <person name="Milshina N.V."/>
            <person name="Mobarry C."/>
            <person name="Morris J."/>
            <person name="Moshrefi A."/>
            <person name="Mount S.M."/>
            <person name="Moy M."/>
            <person name="Murphy B."/>
            <person name="Murphy L."/>
            <person name="Muzny D.M."/>
            <person name="Nelson D.L."/>
            <person name="Nelson D.R."/>
            <person name="Nelson K.A."/>
            <person name="Nixon K."/>
            <person name="Nusskern D.R."/>
            <person name="Pacleb J.M."/>
            <person name="Palazzolo M."/>
            <person name="Pittman G.S."/>
            <person name="Pan S."/>
            <person name="Pollard J."/>
            <person name="Puri V."/>
            <person name="Reese M.G."/>
            <person name="Reinert K."/>
            <person name="Remington K."/>
            <person name="Saunders R.D.C."/>
            <person name="Scheeler F."/>
            <person name="Shen H."/>
            <person name="Shue B.C."/>
            <person name="Siden-Kiamos I."/>
            <person name="Simpson M."/>
            <person name="Skupski M.P."/>
            <person name="Smith T.J."/>
            <person name="Spier E."/>
            <person name="Spradling A.C."/>
            <person name="Stapleton M."/>
            <person name="Strong R."/>
            <person name="Sun E."/>
            <person name="Svirskas R."/>
            <person name="Tector C."/>
            <person name="Turner R."/>
            <person name="Venter E."/>
            <person name="Wang A.H."/>
            <person name="Wang X."/>
            <person name="Wang Z.-Y."/>
            <person name="Wassarman D.A."/>
            <person name="Weinstock G.M."/>
            <person name="Weissenbach J."/>
            <person name="Williams S.M."/>
            <person name="Woodage T."/>
            <person name="Worley K.C."/>
            <person name="Wu D."/>
            <person name="Yang S."/>
            <person name="Yao Q.A."/>
            <person name="Ye J."/>
            <person name="Yeh R.-F."/>
            <person name="Zaveri J.S."/>
            <person name="Zhan M."/>
            <person name="Zhang G."/>
            <person name="Zhao Q."/>
            <person name="Zheng L."/>
            <person name="Zheng X.H."/>
            <person name="Zhong F.N."/>
            <person name="Zhong W."/>
            <person name="Zhou X."/>
            <person name="Zhu S.C."/>
            <person name="Zhu X."/>
            <person name="Smith H.O."/>
            <person name="Gibbs R.A."/>
            <person name="Myers E.W."/>
            <person name="Rubin G.M."/>
            <person name="Venter J.C."/>
        </authorList>
    </citation>
    <scope>NUCLEOTIDE SEQUENCE [LARGE SCALE GENOMIC DNA]</scope>
    <source>
        <strain>Berkeley</strain>
    </source>
</reference>
<reference key="2">
    <citation type="journal article" date="2002" name="Genome Biol.">
        <title>Annotation of the Drosophila melanogaster euchromatic genome: a systematic review.</title>
        <authorList>
            <person name="Misra S."/>
            <person name="Crosby M.A."/>
            <person name="Mungall C.J."/>
            <person name="Matthews B.B."/>
            <person name="Campbell K.S."/>
            <person name="Hradecky P."/>
            <person name="Huang Y."/>
            <person name="Kaminker J.S."/>
            <person name="Millburn G.H."/>
            <person name="Prochnik S.E."/>
            <person name="Smith C.D."/>
            <person name="Tupy J.L."/>
            <person name="Whitfield E.J."/>
            <person name="Bayraktaroglu L."/>
            <person name="Berman B.P."/>
            <person name="Bettencourt B.R."/>
            <person name="Celniker S.E."/>
            <person name="de Grey A.D.N.J."/>
            <person name="Drysdale R.A."/>
            <person name="Harris N.L."/>
            <person name="Richter J."/>
            <person name="Russo S."/>
            <person name="Schroeder A.J."/>
            <person name="Shu S.Q."/>
            <person name="Stapleton M."/>
            <person name="Yamada C."/>
            <person name="Ashburner M."/>
            <person name="Gelbart W.M."/>
            <person name="Rubin G.M."/>
            <person name="Lewis S.E."/>
        </authorList>
    </citation>
    <scope>GENOME REANNOTATION</scope>
    <source>
        <strain>Berkeley</strain>
    </source>
</reference>
<reference key="3">
    <citation type="submission" date="2004-03" db="EMBL/GenBank/DDBJ databases">
        <authorList>
            <person name="Stapleton M."/>
            <person name="Carlson J.W."/>
            <person name="Chavez C."/>
            <person name="Frise E."/>
            <person name="George R.A."/>
            <person name="Pacleb J.M."/>
            <person name="Park S."/>
            <person name="Wan K.H."/>
            <person name="Yu C."/>
            <person name="Celniker S.E."/>
        </authorList>
    </citation>
    <scope>NUCLEOTIDE SEQUENCE [LARGE SCALE MRNA]</scope>
    <source>
        <strain>Berkeley</strain>
        <tissue>Larva</tissue>
        <tissue>Pupae</tissue>
    </source>
</reference>
<organism>
    <name type="scientific">Drosophila melanogaster</name>
    <name type="common">Fruit fly</name>
    <dbReference type="NCBI Taxonomy" id="7227"/>
    <lineage>
        <taxon>Eukaryota</taxon>
        <taxon>Metazoa</taxon>
        <taxon>Ecdysozoa</taxon>
        <taxon>Arthropoda</taxon>
        <taxon>Hexapoda</taxon>
        <taxon>Insecta</taxon>
        <taxon>Pterygota</taxon>
        <taxon>Neoptera</taxon>
        <taxon>Endopterygota</taxon>
        <taxon>Diptera</taxon>
        <taxon>Brachycera</taxon>
        <taxon>Muscomorpha</taxon>
        <taxon>Ephydroidea</taxon>
        <taxon>Drosophilidae</taxon>
        <taxon>Drosophila</taxon>
        <taxon>Sophophora</taxon>
    </lineage>
</organism>